<evidence type="ECO:0000255" key="1">
    <source>
        <dbReference type="HAMAP-Rule" id="MF_01815"/>
    </source>
</evidence>
<feature type="chain" id="PRO_1000056388" description="Beta-ketoacyl-[acyl-carrier-protein] synthase III">
    <location>
        <begin position="1"/>
        <end position="335"/>
    </location>
</feature>
<feature type="region of interest" description="ACP-binding" evidence="1">
    <location>
        <begin position="262"/>
        <end position="266"/>
    </location>
</feature>
<feature type="active site" evidence="1">
    <location>
        <position position="119"/>
    </location>
</feature>
<feature type="active site" evidence="1">
    <location>
        <position position="261"/>
    </location>
</feature>
<feature type="active site" evidence="1">
    <location>
        <position position="291"/>
    </location>
</feature>
<accession>A3PAK3</accession>
<dbReference type="EC" id="2.3.1.180" evidence="1"/>
<dbReference type="EMBL" id="CP000576">
    <property type="protein sequence ID" value="ABO16778.1"/>
    <property type="molecule type" value="Genomic_DNA"/>
</dbReference>
<dbReference type="RefSeq" id="WP_011862181.1">
    <property type="nucleotide sequence ID" value="NC_009091.1"/>
</dbReference>
<dbReference type="SMR" id="A3PAK3"/>
<dbReference type="STRING" id="167546.P9301_01551"/>
<dbReference type="KEGG" id="pmg:P9301_01551"/>
<dbReference type="eggNOG" id="COG0332">
    <property type="taxonomic scope" value="Bacteria"/>
</dbReference>
<dbReference type="HOGENOM" id="CLU_039592_0_1_3"/>
<dbReference type="OrthoDB" id="9815506at2"/>
<dbReference type="UniPathway" id="UPA00094"/>
<dbReference type="Proteomes" id="UP000001430">
    <property type="component" value="Chromosome"/>
</dbReference>
<dbReference type="GO" id="GO:0005737">
    <property type="term" value="C:cytoplasm"/>
    <property type="evidence" value="ECO:0007669"/>
    <property type="project" value="UniProtKB-SubCell"/>
</dbReference>
<dbReference type="GO" id="GO:0004315">
    <property type="term" value="F:3-oxoacyl-[acyl-carrier-protein] synthase activity"/>
    <property type="evidence" value="ECO:0007669"/>
    <property type="project" value="InterPro"/>
</dbReference>
<dbReference type="GO" id="GO:0033818">
    <property type="term" value="F:beta-ketoacyl-acyl-carrier-protein synthase III activity"/>
    <property type="evidence" value="ECO:0007669"/>
    <property type="project" value="UniProtKB-UniRule"/>
</dbReference>
<dbReference type="GO" id="GO:0006633">
    <property type="term" value="P:fatty acid biosynthetic process"/>
    <property type="evidence" value="ECO:0007669"/>
    <property type="project" value="UniProtKB-UniRule"/>
</dbReference>
<dbReference type="CDD" id="cd00830">
    <property type="entry name" value="KAS_III"/>
    <property type="match status" value="1"/>
</dbReference>
<dbReference type="FunFam" id="3.40.47.10:FF:000004">
    <property type="entry name" value="3-oxoacyl-[acyl-carrier-protein] synthase 3"/>
    <property type="match status" value="1"/>
</dbReference>
<dbReference type="Gene3D" id="3.40.47.10">
    <property type="match status" value="1"/>
</dbReference>
<dbReference type="HAMAP" id="MF_01815">
    <property type="entry name" value="FabH"/>
    <property type="match status" value="1"/>
</dbReference>
<dbReference type="InterPro" id="IPR013747">
    <property type="entry name" value="ACP_syn_III_C"/>
</dbReference>
<dbReference type="InterPro" id="IPR013751">
    <property type="entry name" value="ACP_syn_III_N"/>
</dbReference>
<dbReference type="InterPro" id="IPR004655">
    <property type="entry name" value="FabH"/>
</dbReference>
<dbReference type="InterPro" id="IPR016039">
    <property type="entry name" value="Thiolase-like"/>
</dbReference>
<dbReference type="NCBIfam" id="TIGR00747">
    <property type="entry name" value="fabH"/>
    <property type="match status" value="1"/>
</dbReference>
<dbReference type="NCBIfam" id="NF006829">
    <property type="entry name" value="PRK09352.1"/>
    <property type="match status" value="1"/>
</dbReference>
<dbReference type="PANTHER" id="PTHR43091">
    <property type="entry name" value="3-OXOACYL-[ACYL-CARRIER-PROTEIN] SYNTHASE"/>
    <property type="match status" value="1"/>
</dbReference>
<dbReference type="PANTHER" id="PTHR43091:SF1">
    <property type="entry name" value="BETA-KETOACYL-[ACYL-CARRIER-PROTEIN] SYNTHASE III, CHLOROPLASTIC"/>
    <property type="match status" value="1"/>
</dbReference>
<dbReference type="Pfam" id="PF08545">
    <property type="entry name" value="ACP_syn_III"/>
    <property type="match status" value="1"/>
</dbReference>
<dbReference type="Pfam" id="PF08541">
    <property type="entry name" value="ACP_syn_III_C"/>
    <property type="match status" value="1"/>
</dbReference>
<dbReference type="SUPFAM" id="SSF53901">
    <property type="entry name" value="Thiolase-like"/>
    <property type="match status" value="1"/>
</dbReference>
<proteinExistence type="inferred from homology"/>
<protein>
    <recommendedName>
        <fullName evidence="1">Beta-ketoacyl-[acyl-carrier-protein] synthase III</fullName>
        <shortName evidence="1">Beta-ketoacyl-ACP synthase III</shortName>
        <shortName evidence="1">KAS III</shortName>
        <ecNumber evidence="1">2.3.1.180</ecNumber>
    </recommendedName>
    <alternativeName>
        <fullName evidence="1">3-oxoacyl-[acyl-carrier-protein] synthase 3</fullName>
    </alternativeName>
    <alternativeName>
        <fullName evidence="1">3-oxoacyl-[acyl-carrier-protein] synthase III</fullName>
    </alternativeName>
</protein>
<gene>
    <name evidence="1" type="primary">fabH</name>
    <name type="ordered locus">P9301_01551</name>
</gene>
<organism>
    <name type="scientific">Prochlorococcus marinus (strain MIT 9301)</name>
    <dbReference type="NCBI Taxonomy" id="167546"/>
    <lineage>
        <taxon>Bacteria</taxon>
        <taxon>Bacillati</taxon>
        <taxon>Cyanobacteriota</taxon>
        <taxon>Cyanophyceae</taxon>
        <taxon>Synechococcales</taxon>
        <taxon>Prochlorococcaceae</taxon>
        <taxon>Prochlorococcus</taxon>
    </lineage>
</organism>
<keyword id="KW-0012">Acyltransferase</keyword>
<keyword id="KW-0963">Cytoplasm</keyword>
<keyword id="KW-0275">Fatty acid biosynthesis</keyword>
<keyword id="KW-0276">Fatty acid metabolism</keyword>
<keyword id="KW-0444">Lipid biosynthesis</keyword>
<keyword id="KW-0443">Lipid metabolism</keyword>
<keyword id="KW-0511">Multifunctional enzyme</keyword>
<keyword id="KW-1185">Reference proteome</keyword>
<keyword id="KW-0808">Transferase</keyword>
<reference key="1">
    <citation type="journal article" date="2007" name="PLoS Genet.">
        <title>Patterns and implications of gene gain and loss in the evolution of Prochlorococcus.</title>
        <authorList>
            <person name="Kettler G.C."/>
            <person name="Martiny A.C."/>
            <person name="Huang K."/>
            <person name="Zucker J."/>
            <person name="Coleman M.L."/>
            <person name="Rodrigue S."/>
            <person name="Chen F."/>
            <person name="Lapidus A."/>
            <person name="Ferriera S."/>
            <person name="Johnson J."/>
            <person name="Steglich C."/>
            <person name="Church G.M."/>
            <person name="Richardson P."/>
            <person name="Chisholm S.W."/>
        </authorList>
    </citation>
    <scope>NUCLEOTIDE SEQUENCE [LARGE SCALE GENOMIC DNA]</scope>
    <source>
        <strain>MIT 9301</strain>
    </source>
</reference>
<name>FABH_PROM0</name>
<sequence>MEGIDFNQIGVSFKGSGSYVPDQILTNQKISQKVDTSNEWIKSRTGISERRISSLGDNVNEMGYKAALTAIEMANWDIKTVDLIVLATSTPHDLFGSAPSIQAKLGAANAVAFDLTAACSGFLFALITTSQFLKGGSFKRAIVIGADQLSSFVDWNDRRSCILFGDGAGALAIEATNQFDNLIGFDMRTDGERGSFLNLPSKNNKDLIIDNIDFLSGAFSPIQMNGQEVYKFAVREVPIILEKLFNKTHYTSDEVDWLVLHQANQRILDSVGDRLKIPREKILSNLEKYGNTSAATIPLVIDEAIRSNRIKQNDIIATSGFGAGLSWGAALIKWG</sequence>
<comment type="function">
    <text evidence="1">Catalyzes the condensation reaction of fatty acid synthesis by the addition to an acyl acceptor of two carbons from malonyl-ACP. Catalyzes the first condensation reaction which initiates fatty acid synthesis and may therefore play a role in governing the total rate of fatty acid production. Possesses both acetoacetyl-ACP synthase and acetyl transacylase activities. Its substrate specificity determines the biosynthesis of branched-chain and/or straight-chain of fatty acids.</text>
</comment>
<comment type="catalytic activity">
    <reaction evidence="1">
        <text>malonyl-[ACP] + acetyl-CoA + H(+) = 3-oxobutanoyl-[ACP] + CO2 + CoA</text>
        <dbReference type="Rhea" id="RHEA:12080"/>
        <dbReference type="Rhea" id="RHEA-COMP:9623"/>
        <dbReference type="Rhea" id="RHEA-COMP:9625"/>
        <dbReference type="ChEBI" id="CHEBI:15378"/>
        <dbReference type="ChEBI" id="CHEBI:16526"/>
        <dbReference type="ChEBI" id="CHEBI:57287"/>
        <dbReference type="ChEBI" id="CHEBI:57288"/>
        <dbReference type="ChEBI" id="CHEBI:78449"/>
        <dbReference type="ChEBI" id="CHEBI:78450"/>
        <dbReference type="EC" id="2.3.1.180"/>
    </reaction>
</comment>
<comment type="pathway">
    <text evidence="1">Lipid metabolism; fatty acid biosynthesis.</text>
</comment>
<comment type="subunit">
    <text evidence="1">Homodimer.</text>
</comment>
<comment type="subcellular location">
    <subcellularLocation>
        <location evidence="1">Cytoplasm</location>
    </subcellularLocation>
</comment>
<comment type="domain">
    <text evidence="1">The last Arg residue of the ACP-binding site is essential for the weak association between ACP/AcpP and FabH.</text>
</comment>
<comment type="similarity">
    <text evidence="1">Belongs to the thiolase-like superfamily. FabH family.</text>
</comment>